<feature type="chain" id="PRO_0000446949" description="Diphosphomevalonate decarboxylase 1">
    <location>
        <begin position="1"/>
        <end position="417"/>
    </location>
</feature>
<feature type="short sequence motif" description="Peroxisomal targeting signal PTS2" evidence="1">
    <location>
        <begin position="39"/>
        <end position="47"/>
    </location>
</feature>
<feature type="binding site" evidence="1">
    <location>
        <begin position="22"/>
        <end position="25"/>
    </location>
    <ligand>
        <name>(R)-5-diphosphomevalonate</name>
        <dbReference type="ChEBI" id="CHEBI:57557"/>
    </ligand>
</feature>
<feature type="binding site" evidence="1">
    <location>
        <position position="77"/>
    </location>
    <ligand>
        <name>(R)-5-diphosphomevalonate</name>
        <dbReference type="ChEBI" id="CHEBI:57557"/>
    </ligand>
</feature>
<feature type="binding site" evidence="1">
    <location>
        <begin position="160"/>
        <end position="165"/>
    </location>
    <ligand>
        <name>(R)-5-diphosphomevalonate</name>
        <dbReference type="ChEBI" id="CHEBI:57557"/>
    </ligand>
</feature>
<feature type="binding site" evidence="1">
    <location>
        <position position="216"/>
    </location>
    <ligand>
        <name>(R)-5-diphosphomevalonate</name>
        <dbReference type="ChEBI" id="CHEBI:57557"/>
    </ligand>
</feature>
<keyword id="KW-0067">ATP-binding</keyword>
<keyword id="KW-0414">Isoprene biosynthesis</keyword>
<keyword id="KW-0444">Lipid biosynthesis</keyword>
<keyword id="KW-0443">Lipid metabolism</keyword>
<keyword id="KW-0456">Lyase</keyword>
<keyword id="KW-0547">Nucleotide-binding</keyword>
<keyword id="KW-0576">Peroxisome</keyword>
<keyword id="KW-0752">Steroid biosynthesis</keyword>
<keyword id="KW-0753">Steroid metabolism</keyword>
<keyword id="KW-0756">Sterol biosynthesis</keyword>
<keyword id="KW-1207">Sterol metabolism</keyword>
<evidence type="ECO:0000250" key="1">
    <source>
        <dbReference type="UniProtKB" id="O23722"/>
    </source>
</evidence>
<evidence type="ECO:0000303" key="2">
    <source>
    </source>
</evidence>
<evidence type="ECO:0000303" key="3">
    <source>
    </source>
</evidence>
<evidence type="ECO:0000303" key="4">
    <source ref="1"/>
</evidence>
<evidence type="ECO:0000305" key="5"/>
<name>MVD1_PANGI</name>
<organism>
    <name type="scientific">Panax ginseng</name>
    <name type="common">Korean ginseng</name>
    <dbReference type="NCBI Taxonomy" id="4054"/>
    <lineage>
        <taxon>Eukaryota</taxon>
        <taxon>Viridiplantae</taxon>
        <taxon>Streptophyta</taxon>
        <taxon>Embryophyta</taxon>
        <taxon>Tracheophyta</taxon>
        <taxon>Spermatophyta</taxon>
        <taxon>Magnoliopsida</taxon>
        <taxon>eudicotyledons</taxon>
        <taxon>Gunneridae</taxon>
        <taxon>Pentapetalae</taxon>
        <taxon>asterids</taxon>
        <taxon>campanulids</taxon>
        <taxon>Apiales</taxon>
        <taxon>Araliaceae</taxon>
        <taxon>Panax</taxon>
    </lineage>
</organism>
<proteinExistence type="evidence at transcript level"/>
<reference key="1">
    <citation type="submission" date="2009-12" db="EMBL/GenBank/DDBJ databases">
        <title>Cloning and characterization of mevalonate diphosphate decarboxylase genes in the important medicinal plant, Panax ginseng.</title>
        <authorList>
            <person name="Hou C."/>
            <person name="Zhao S."/>
        </authorList>
    </citation>
    <scope>NUCLEOTIDE SEQUENCE [MRNA]</scope>
    <source>
        <tissue>Root hair</tissue>
    </source>
</reference>
<reference key="2">
    <citation type="journal article" date="2018" name="Biotechnol. Appl. Biochem.">
        <title>Advances in ginsenoside biosynthesis and metabolic regulation.</title>
        <authorList>
            <person name="Lu J."/>
            <person name="Li J."/>
            <person name="Wang S."/>
            <person name="Yao L."/>
            <person name="Liang W."/>
            <person name="Wang J."/>
            <person name="Gao W."/>
        </authorList>
    </citation>
    <scope>REVIEW</scope>
</reference>
<reference key="3">
    <citation type="journal article" date="2018" name="Molecules">
        <title>Progress on the studies of the key enzymes of ginsenoside biosynthesis.</title>
        <authorList>
            <person name="Yang J.-L."/>
            <person name="Hu Z.-F."/>
            <person name="Zhang T.-T."/>
            <person name="Gu A.-D."/>
            <person name="Gong T."/>
            <person name="Zhu P."/>
        </authorList>
    </citation>
    <scope>REVIEW</scope>
    <scope>NOMENCLATURE</scope>
</reference>
<accession>D0EAP4</accession>
<comment type="function">
    <text evidence="1 2 3">Performs the first committed step in the biosynthesis of isoprene-containing compounds such as sterols and terpenoids (By similarity). Component of the triterpene saponins (e.g. ginsenosides or panaxosides) and phytosterols biosynthetic pathways (PubMed:29378087). Catalyzes the conversion of mevalonate diphosphate to isopentenyl diphosphate (IPP) (PubMed:29509695).</text>
</comment>
<comment type="catalytic activity">
    <reaction evidence="1">
        <text>(R)-5-diphosphomevalonate + ATP = isopentenyl diphosphate + ADP + phosphate + CO2</text>
        <dbReference type="Rhea" id="RHEA:23732"/>
        <dbReference type="ChEBI" id="CHEBI:16526"/>
        <dbReference type="ChEBI" id="CHEBI:30616"/>
        <dbReference type="ChEBI" id="CHEBI:43474"/>
        <dbReference type="ChEBI" id="CHEBI:57557"/>
        <dbReference type="ChEBI" id="CHEBI:128769"/>
        <dbReference type="ChEBI" id="CHEBI:456216"/>
        <dbReference type="EC" id="4.1.1.33"/>
    </reaction>
</comment>
<comment type="pathway">
    <text evidence="5">Isoprenoid biosynthesis; isopentenyl diphosphate biosynthesis via mevalonate pathway; isopentenyl diphosphate from (R)-mevalonate: step 3/3.</text>
</comment>
<comment type="subunit">
    <text evidence="1">Homodimer.</text>
</comment>
<comment type="subcellular location">
    <subcellularLocation>
        <location evidence="1">Peroxisome</location>
    </subcellularLocation>
</comment>
<comment type="similarity">
    <text evidence="5">Belongs to the diphosphomevalonate decarboxylase family.</text>
</comment>
<protein>
    <recommendedName>
        <fullName evidence="5">Diphosphomevalonate decarboxylase 1</fullName>
        <shortName evidence="4">Mevalonate diphosphate decarboxylase</shortName>
        <ecNumber evidence="1">4.1.1.33</ecNumber>
    </recommendedName>
    <alternativeName>
        <fullName evidence="3">Mevalonate pyrophosphate decarboxylase</fullName>
    </alternativeName>
</protein>
<dbReference type="EC" id="4.1.1.33" evidence="1"/>
<dbReference type="EMBL" id="GQ455989">
    <property type="protein sequence ID" value="ACW83616.2"/>
    <property type="molecule type" value="mRNA"/>
</dbReference>
<dbReference type="SMR" id="D0EAP4"/>
<dbReference type="UniPathway" id="UPA00057">
    <property type="reaction ID" value="UER00100"/>
</dbReference>
<dbReference type="GO" id="GO:0005829">
    <property type="term" value="C:cytosol"/>
    <property type="evidence" value="ECO:0007669"/>
    <property type="project" value="InterPro"/>
</dbReference>
<dbReference type="GO" id="GO:0005777">
    <property type="term" value="C:peroxisome"/>
    <property type="evidence" value="ECO:0007669"/>
    <property type="project" value="UniProtKB-SubCell"/>
</dbReference>
<dbReference type="GO" id="GO:0005524">
    <property type="term" value="F:ATP binding"/>
    <property type="evidence" value="ECO:0007669"/>
    <property type="project" value="UniProtKB-KW"/>
</dbReference>
<dbReference type="GO" id="GO:0004163">
    <property type="term" value="F:diphosphomevalonate decarboxylase activity"/>
    <property type="evidence" value="ECO:0007669"/>
    <property type="project" value="UniProtKB-EC"/>
</dbReference>
<dbReference type="GO" id="GO:0019287">
    <property type="term" value="P:isopentenyl diphosphate biosynthetic process, mevalonate pathway"/>
    <property type="evidence" value="ECO:0007669"/>
    <property type="project" value="UniProtKB-UniPathway"/>
</dbReference>
<dbReference type="GO" id="GO:0016126">
    <property type="term" value="P:sterol biosynthetic process"/>
    <property type="evidence" value="ECO:0007669"/>
    <property type="project" value="UniProtKB-KW"/>
</dbReference>
<dbReference type="FunFam" id="3.30.230.10:FF:000018">
    <property type="entry name" value="Diphosphomevalonate decarboxylase"/>
    <property type="match status" value="1"/>
</dbReference>
<dbReference type="FunFam" id="3.30.70.890:FF:000005">
    <property type="entry name" value="Diphosphomevalonate decarboxylase"/>
    <property type="match status" value="1"/>
</dbReference>
<dbReference type="Gene3D" id="3.30.230.10">
    <property type="match status" value="1"/>
</dbReference>
<dbReference type="Gene3D" id="3.30.70.890">
    <property type="entry name" value="GHMP kinase, C-terminal domain"/>
    <property type="match status" value="1"/>
</dbReference>
<dbReference type="InterPro" id="IPR036554">
    <property type="entry name" value="GHMP_kinase_C_sf"/>
</dbReference>
<dbReference type="InterPro" id="IPR005935">
    <property type="entry name" value="Mev_decarb"/>
</dbReference>
<dbReference type="InterPro" id="IPR029765">
    <property type="entry name" value="Mev_diP_decarb"/>
</dbReference>
<dbReference type="InterPro" id="IPR053859">
    <property type="entry name" value="MVD-like_N"/>
</dbReference>
<dbReference type="InterPro" id="IPR041431">
    <property type="entry name" value="Mvd1_C"/>
</dbReference>
<dbReference type="InterPro" id="IPR020568">
    <property type="entry name" value="Ribosomal_Su5_D2-typ_SF"/>
</dbReference>
<dbReference type="InterPro" id="IPR014721">
    <property type="entry name" value="Ribsml_uS5_D2-typ_fold_subgr"/>
</dbReference>
<dbReference type="NCBIfam" id="TIGR01240">
    <property type="entry name" value="mevDPdecarb"/>
    <property type="match status" value="1"/>
</dbReference>
<dbReference type="PANTHER" id="PTHR10977">
    <property type="entry name" value="DIPHOSPHOMEVALONATE DECARBOXYLASE"/>
    <property type="match status" value="1"/>
</dbReference>
<dbReference type="PANTHER" id="PTHR10977:SF3">
    <property type="entry name" value="DIPHOSPHOMEVALONATE DECARBOXYLASE"/>
    <property type="match status" value="1"/>
</dbReference>
<dbReference type="Pfam" id="PF18376">
    <property type="entry name" value="MDD_C"/>
    <property type="match status" value="1"/>
</dbReference>
<dbReference type="Pfam" id="PF22700">
    <property type="entry name" value="MVD-like_N"/>
    <property type="match status" value="1"/>
</dbReference>
<dbReference type="PIRSF" id="PIRSF015950">
    <property type="entry name" value="Mev_P_decrbx"/>
    <property type="match status" value="1"/>
</dbReference>
<dbReference type="SUPFAM" id="SSF55060">
    <property type="entry name" value="GHMP Kinase, C-terminal domain"/>
    <property type="match status" value="1"/>
</dbReference>
<dbReference type="SUPFAM" id="SSF54211">
    <property type="entry name" value="Ribosomal protein S5 domain 2-like"/>
    <property type="match status" value="1"/>
</dbReference>
<gene>
    <name evidence="5" type="primary">MVD1</name>
    <name evidence="3" type="synonym">MPD</name>
    <name evidence="4" type="synonym">MVD</name>
</gene>
<sequence>MAESWVIMVTAQTPINIAVIKYWGKRDETLILPINDSIRVSLDPDHLCTTTTVSVRPSFEQDRMWLNGKEISLLGGRFQSCLREIRSRARDLEDEKKGIVIKKMDWEKLHFHIASYNNFPTAAGLASSAAGLACFVFALAKLLTLQEDNGQLSAIARRGSGSACRSLYGGFVKWIMGKEENGSDSIAVQLADEKHWDDLVIVIAVVSARQKETSSTTGMQDSCKTSMLIQHRAKEVVPKRILQMEDAIEKRDFPSFARLACADSNQFHAVCLDTSPPIFYINDTSHKIISCVEKWNRSVGTPQVAYTFDAGPNAVLIARDRKIAALLLRRLLFHFPPHSNTDSNSYVIGDKSILQDVGVQDTKDIESLPPPPEIKDNIPAQKSNGDVSYFICTRPGRGPVLLPDSRALLNPETGLPK</sequence>